<dbReference type="EMBL" id="M75136">
    <property type="protein sequence ID" value="AAA88162.1"/>
    <property type="molecule type" value="Genomic_DNA"/>
</dbReference>
<dbReference type="PIR" id="F36792">
    <property type="entry name" value="MMBEI7"/>
</dbReference>
<dbReference type="RefSeq" id="NP_041150.1">
    <property type="nucleotide sequence ID" value="NC_001493.2"/>
</dbReference>
<dbReference type="SMR" id="Q00138"/>
<dbReference type="GeneID" id="1488372"/>
<dbReference type="KEGG" id="vg:1488372"/>
<dbReference type="Proteomes" id="UP000007643">
    <property type="component" value="Segment"/>
</dbReference>
<dbReference type="GO" id="GO:0016020">
    <property type="term" value="C:membrane"/>
    <property type="evidence" value="ECO:0007669"/>
    <property type="project" value="UniProtKB-SubCell"/>
</dbReference>
<name>VG59_ICHVA</name>
<comment type="subcellular location">
    <subcellularLocation>
        <location evidence="2">Membrane</location>
        <topology evidence="2">Multi-pass membrane protein</topology>
    </subcellularLocation>
</comment>
<evidence type="ECO:0000255" key="1"/>
<evidence type="ECO:0000305" key="2"/>
<keyword id="KW-0472">Membrane</keyword>
<keyword id="KW-1185">Reference proteome</keyword>
<keyword id="KW-0812">Transmembrane</keyword>
<keyword id="KW-1133">Transmembrane helix</keyword>
<feature type="chain" id="PRO_0000222138" description="Putative membrane protein ORF59">
    <location>
        <begin position="1"/>
        <end position="345"/>
    </location>
</feature>
<feature type="transmembrane region" description="Helical" evidence="1">
    <location>
        <begin position="46"/>
        <end position="63"/>
    </location>
</feature>
<feature type="transmembrane region" description="Helical" evidence="1">
    <location>
        <begin position="101"/>
        <end position="118"/>
    </location>
</feature>
<feature type="transmembrane region" description="Helical" evidence="1">
    <location>
        <begin position="147"/>
        <end position="165"/>
    </location>
</feature>
<feature type="transmembrane region" description="Helical" evidence="1">
    <location>
        <begin position="265"/>
        <end position="286"/>
    </location>
</feature>
<proteinExistence type="predicted"/>
<gene>
    <name type="primary">ORF59</name>
</gene>
<accession>Q00138</accession>
<organism>
    <name type="scientific">Ictalurid herpesvirus 1 (strain Auburn)</name>
    <name type="common">IcHV-1</name>
    <name type="synonym">Channel catfish herpesvirus</name>
    <dbReference type="NCBI Taxonomy" id="766178"/>
    <lineage>
        <taxon>Viruses</taxon>
        <taxon>Duplodnaviria</taxon>
        <taxon>Heunggongvirae</taxon>
        <taxon>Peploviricota</taxon>
        <taxon>Herviviricetes</taxon>
        <taxon>Herpesvirales</taxon>
        <taxon>Alloherpesviridae</taxon>
        <taxon>Ictavirus</taxon>
        <taxon>Ictavirus ictaluridallo1</taxon>
        <taxon>Ictalurid herpesvirus 1</taxon>
    </lineage>
</organism>
<organismHost>
    <name type="scientific">Ictaluridae</name>
    <name type="common">bullhead catfishes</name>
    <dbReference type="NCBI Taxonomy" id="7996"/>
</organismHost>
<protein>
    <recommendedName>
        <fullName>Putative membrane protein ORF59</fullName>
    </recommendedName>
</protein>
<reference key="1">
    <citation type="journal article" date="1992" name="Virology">
        <title>Channel catfish virus: a new type of herpesvirus.</title>
        <authorList>
            <person name="Davison A.J."/>
        </authorList>
    </citation>
    <scope>NUCLEOTIDE SEQUENCE [LARGE SCALE GENOMIC DNA]</scope>
</reference>
<sequence length="345" mass="38135">MVGKGLPVLKNALKQLEGLSKAASVGTAEVIQKAYHQLTKLQAARLVFAYVTLVLLYVIMMLILTSSVIDLVGFSTPHRLPPFVDQAQLKHFNTAQDTLMIVFVALGVNFLLVILVFLIYLLIKLKHIEAPLSGSMSYFAHPVLKYIFGIMSFIFVFIITVFSILRITCADANTLVQDLELLSNTSFADTNFTNAAHAAVSGLLTNCTAPHTDIAKCGYSGVHLLMSLESRTRRLWTGSTSGGLTEAGIPRMLTAVGSCWMTKEVVPVILLVMFILYMFLHLWMVIRALRRRRLGTIIEDEHLPLTSYEDGELDEEGGADNLLYAIPPGSTIPGMRKWNYTPARA</sequence>